<gene>
    <name type="primary">SPTSSB</name>
    <name type="synonym">ADMP</name>
    <name type="synonym">SSSPTB</name>
</gene>
<protein>
    <recommendedName>
        <fullName>Serine palmitoyltransferase small subunit B</fullName>
    </recommendedName>
    <alternativeName>
        <fullName>Protein ADMP</fullName>
    </alternativeName>
    <alternativeName>
        <fullName>Small subunit of serine palmitoyltransferase B</fullName>
        <shortName>ssSPTb</shortName>
    </alternativeName>
</protein>
<proteinExistence type="inferred from homology"/>
<dbReference type="EMBL" id="BC122600">
    <property type="protein sequence ID" value="AAI22601.1"/>
    <property type="molecule type" value="mRNA"/>
</dbReference>
<dbReference type="RefSeq" id="NP_001104244.1">
    <property type="nucleotide sequence ID" value="NM_001110774.1"/>
</dbReference>
<dbReference type="RefSeq" id="XP_059742919.1">
    <property type="nucleotide sequence ID" value="XM_059886936.1"/>
</dbReference>
<dbReference type="RefSeq" id="XP_059742921.1">
    <property type="nucleotide sequence ID" value="XM_059886938.1"/>
</dbReference>
<dbReference type="SMR" id="Q0IIK4"/>
<dbReference type="FunCoup" id="Q0IIK4">
    <property type="interactions" value="22"/>
</dbReference>
<dbReference type="STRING" id="9913.ENSBTAP00000068068"/>
<dbReference type="PaxDb" id="9913-ENSBTAP00000055561"/>
<dbReference type="Ensembl" id="ENSBTAT00000122402.1">
    <property type="protein sequence ID" value="ENSBTAP00000093232.1"/>
    <property type="gene ID" value="ENSBTAG00000049223.2"/>
</dbReference>
<dbReference type="Ensembl" id="ENSBTAT00000124865.1">
    <property type="protein sequence ID" value="ENSBTAP00000097774.1"/>
    <property type="gene ID" value="ENSBTAG00000049223.2"/>
</dbReference>
<dbReference type="Ensembl" id="ENSBTAT00000130563.1">
    <property type="protein sequence ID" value="ENSBTAP00000077289.1"/>
    <property type="gene ID" value="ENSBTAG00000049223.2"/>
</dbReference>
<dbReference type="Ensembl" id="ENSBTAT00000131672.1">
    <property type="protein sequence ID" value="ENSBTAP00000098181.1"/>
    <property type="gene ID" value="ENSBTAG00000049223.2"/>
</dbReference>
<dbReference type="GeneID" id="780785"/>
<dbReference type="KEGG" id="bta:780785"/>
<dbReference type="CTD" id="165679"/>
<dbReference type="VEuPathDB" id="HostDB:ENSBTAG00000049223"/>
<dbReference type="VGNC" id="VGNC:35260">
    <property type="gene designation" value="SPTSSB"/>
</dbReference>
<dbReference type="eggNOG" id="ENOG502S4Q9">
    <property type="taxonomic scope" value="Eukaryota"/>
</dbReference>
<dbReference type="GeneTree" id="ENSGT00390000002766"/>
<dbReference type="HOGENOM" id="CLU_187811_0_0_1"/>
<dbReference type="InParanoid" id="Q0IIK4"/>
<dbReference type="OMA" id="WEFFSEI"/>
<dbReference type="OrthoDB" id="202672at2759"/>
<dbReference type="TreeFam" id="TF328418"/>
<dbReference type="Reactome" id="R-BTA-1660661">
    <property type="pathway name" value="Sphingolipid de novo biosynthesis"/>
</dbReference>
<dbReference type="UniPathway" id="UPA00222"/>
<dbReference type="Proteomes" id="UP000009136">
    <property type="component" value="Chromosome 1"/>
</dbReference>
<dbReference type="Bgee" id="ENSBTAG00000049223">
    <property type="expression patterns" value="Expressed in abomasum and 80 other cell types or tissues"/>
</dbReference>
<dbReference type="GO" id="GO:0005789">
    <property type="term" value="C:endoplasmic reticulum membrane"/>
    <property type="evidence" value="ECO:0007669"/>
    <property type="project" value="UniProtKB-SubCell"/>
</dbReference>
<dbReference type="GO" id="GO:0017059">
    <property type="term" value="C:serine palmitoyltransferase complex"/>
    <property type="evidence" value="ECO:0000250"/>
    <property type="project" value="UniProtKB"/>
</dbReference>
<dbReference type="GO" id="GO:0004758">
    <property type="term" value="F:serine C-palmitoyltransferase activity"/>
    <property type="evidence" value="ECO:0007669"/>
    <property type="project" value="Ensembl"/>
</dbReference>
<dbReference type="GO" id="GO:0046513">
    <property type="term" value="P:ceramide biosynthetic process"/>
    <property type="evidence" value="ECO:0000250"/>
    <property type="project" value="UniProtKB"/>
</dbReference>
<dbReference type="GO" id="GO:0007029">
    <property type="term" value="P:endoplasmic reticulum organization"/>
    <property type="evidence" value="ECO:0000250"/>
    <property type="project" value="UniProtKB"/>
</dbReference>
<dbReference type="GO" id="GO:0030148">
    <property type="term" value="P:sphingolipid biosynthetic process"/>
    <property type="evidence" value="ECO:0000250"/>
    <property type="project" value="UniProtKB"/>
</dbReference>
<dbReference type="GO" id="GO:0046512">
    <property type="term" value="P:sphingosine biosynthetic process"/>
    <property type="evidence" value="ECO:0007669"/>
    <property type="project" value="Ensembl"/>
</dbReference>
<dbReference type="InterPro" id="IPR024512">
    <property type="entry name" value="Ser_palmitoyltrfase_ssu-like"/>
</dbReference>
<dbReference type="PANTHER" id="PTHR28612">
    <property type="entry name" value="SERINE PALMITOYLTRANSFERASE SMALL SUBUNIT B"/>
    <property type="match status" value="1"/>
</dbReference>
<dbReference type="PANTHER" id="PTHR28612:SF1">
    <property type="entry name" value="SERINE PALMITOYLTRANSFERASE SMALL SUBUNIT B"/>
    <property type="match status" value="1"/>
</dbReference>
<dbReference type="Pfam" id="PF11779">
    <property type="entry name" value="SPT_ssu-like"/>
    <property type="match status" value="1"/>
</dbReference>
<sequence length="76" mass="9180">MDFKRVKDYLSWLYYQYQIISCCAVLEPWEQSMFNTIILTIFAMVVYTAYVFIPIHIRLAWEFFSKMCGYHSTISN</sequence>
<feature type="chain" id="PRO_0000378916" description="Serine palmitoyltransferase small subunit B">
    <location>
        <begin position="1"/>
        <end position="76"/>
    </location>
</feature>
<feature type="topological domain" description="Cytoplasmic" evidence="3">
    <location>
        <begin position="1"/>
        <end position="11"/>
    </location>
</feature>
<feature type="transmembrane region" description="Helical" evidence="3">
    <location>
        <begin position="12"/>
        <end position="29"/>
    </location>
</feature>
<feature type="topological domain" description="Lumenal" evidence="3">
    <location>
        <begin position="30"/>
        <end position="36"/>
    </location>
</feature>
<feature type="transmembrane region" description="Helical" evidence="3">
    <location>
        <begin position="37"/>
        <end position="57"/>
    </location>
</feature>
<feature type="topological domain" description="Cytoplasmic" evidence="3">
    <location>
        <begin position="58"/>
        <end position="76"/>
    </location>
</feature>
<keyword id="KW-0256">Endoplasmic reticulum</keyword>
<keyword id="KW-0443">Lipid metabolism</keyword>
<keyword id="KW-0472">Membrane</keyword>
<keyword id="KW-1185">Reference proteome</keyword>
<keyword id="KW-0746">Sphingolipid metabolism</keyword>
<keyword id="KW-0812">Transmembrane</keyword>
<keyword id="KW-1133">Transmembrane helix</keyword>
<evidence type="ECO:0000250" key="1">
    <source>
        <dbReference type="UniProtKB" id="Q8NFR3"/>
    </source>
</evidence>
<evidence type="ECO:0000250" key="2">
    <source>
        <dbReference type="UniProtKB" id="Q969W0"/>
    </source>
</evidence>
<evidence type="ECO:0000255" key="3"/>
<evidence type="ECO:0000305" key="4"/>
<comment type="function">
    <text evidence="1">Component of the serine palmitoyltransferase multisubunit enzyme (SPT) that catalyzes the initial and rate-limiting step in sphingolipid biosynthesis by condensing L-serine and activated acyl-CoA (most commonly palmitoyl-CoA) to form long-chain bases. The SPT complex is composed of SPTLC1, SPTLC2 or SPTLC3 and SPTSSA or SPTSSB. Within this complex, the heterodimer consisting of SPTLC1 and SPTLC2/SPTLC3 forms the catalytic core. Within the SPT complex, SPTSSB stimulates the catalytic activity and plays a role in substrate specificity. SPT complexes with this subunit showing a preference for longer acyl-CoAs. The SPTLC1-SPTLC2-SPTSSB complex shows a strong preference for C18-CoA substrate, while the SPTLC1-SPTLC3-SPTSSB isozyme displays an ability to use a broader range of acyl-CoAs, without apparent preference.</text>
</comment>
<comment type="pathway">
    <text>Lipid metabolism; sphingolipid metabolism.</text>
</comment>
<comment type="subunit">
    <text evidence="1 2">Component of the serine palmitoyltransferase (SPT) complex, which is composed of SPTLC1, SPTLC2 or SPTLC3 and SPTSSA or SPTSSB. The heterodimer consisting of SPTLC1 and SPTLC2/SPTLC3 forms the catalytic core of the enzyme, while SPTSSA or SPTSSB subunits determine substrate specificity (By similarity). SPT also interacts with ORMDL proteins, especially ORMDL3, which negatively regulate SPT activity in the presence of ceramides (By similarity).</text>
</comment>
<comment type="subcellular location">
    <subcellularLocation>
        <location evidence="4">Endoplasmic reticulum membrane</location>
        <topology evidence="4">Multi-pass membrane protein</topology>
    </subcellularLocation>
</comment>
<comment type="similarity">
    <text evidence="4">Belongs to the SPTSS family. SPTSSB subfamily.</text>
</comment>
<reference key="1">
    <citation type="submission" date="2006-08" db="EMBL/GenBank/DDBJ databases">
        <authorList>
            <consortium name="NIH - Mammalian Gene Collection (MGC) project"/>
        </authorList>
    </citation>
    <scope>NUCLEOTIDE SEQUENCE [LARGE SCALE MRNA]</scope>
    <source>
        <strain>Hereford</strain>
        <tissue>Thalamus</tissue>
    </source>
</reference>
<accession>Q0IIK4</accession>
<name>SPTSB_BOVIN</name>
<organism>
    <name type="scientific">Bos taurus</name>
    <name type="common">Bovine</name>
    <dbReference type="NCBI Taxonomy" id="9913"/>
    <lineage>
        <taxon>Eukaryota</taxon>
        <taxon>Metazoa</taxon>
        <taxon>Chordata</taxon>
        <taxon>Craniata</taxon>
        <taxon>Vertebrata</taxon>
        <taxon>Euteleostomi</taxon>
        <taxon>Mammalia</taxon>
        <taxon>Eutheria</taxon>
        <taxon>Laurasiatheria</taxon>
        <taxon>Artiodactyla</taxon>
        <taxon>Ruminantia</taxon>
        <taxon>Pecora</taxon>
        <taxon>Bovidae</taxon>
        <taxon>Bovinae</taxon>
        <taxon>Bos</taxon>
    </lineage>
</organism>